<feature type="chain" id="PRO_0000122394" description="Large ribosomal subunit protein eL28">
    <location>
        <begin position="1"/>
        <end position="132"/>
    </location>
</feature>
<evidence type="ECO:0000305" key="1"/>
<proteinExistence type="evidence at transcript level"/>
<sequence length="132" mass="14352">MSQDLVWSIIKKNNAFLKSSHGLTLSAEPGNLRNKNSLKYSGLARRTTIDVAAVNGKVVVSSKIVKKAAFPAQSKKTTTFSTVNTRKTARFVKTLATQYAPELRAAALGRLHRVQSALRSAKKAAARKAKKN</sequence>
<accession>Q9GS21</accession>
<accession>Q54S61</accession>
<reference key="1">
    <citation type="submission" date="2000-07" db="EMBL/GenBank/DDBJ databases">
        <title>Potential binding-partners of comitin.</title>
        <authorList>
            <person name="Schreiner T."/>
            <person name="Kuspa A."/>
            <person name="Noegel A.A."/>
        </authorList>
    </citation>
    <scope>NUCLEOTIDE SEQUENCE [MRNA]</scope>
    <source>
        <strain>AX2</strain>
    </source>
</reference>
<reference key="2">
    <citation type="journal article" date="2005" name="Nature">
        <title>The genome of the social amoeba Dictyostelium discoideum.</title>
        <authorList>
            <person name="Eichinger L."/>
            <person name="Pachebat J.A."/>
            <person name="Gloeckner G."/>
            <person name="Rajandream M.A."/>
            <person name="Sucgang R."/>
            <person name="Berriman M."/>
            <person name="Song J."/>
            <person name="Olsen R."/>
            <person name="Szafranski K."/>
            <person name="Xu Q."/>
            <person name="Tunggal B."/>
            <person name="Kummerfeld S."/>
            <person name="Madera M."/>
            <person name="Konfortov B.A."/>
            <person name="Rivero F."/>
            <person name="Bankier A.T."/>
            <person name="Lehmann R."/>
            <person name="Hamlin N."/>
            <person name="Davies R."/>
            <person name="Gaudet P."/>
            <person name="Fey P."/>
            <person name="Pilcher K."/>
            <person name="Chen G."/>
            <person name="Saunders D."/>
            <person name="Sodergren E.J."/>
            <person name="Davis P."/>
            <person name="Kerhornou A."/>
            <person name="Nie X."/>
            <person name="Hall N."/>
            <person name="Anjard C."/>
            <person name="Hemphill L."/>
            <person name="Bason N."/>
            <person name="Farbrother P."/>
            <person name="Desany B."/>
            <person name="Just E."/>
            <person name="Morio T."/>
            <person name="Rost R."/>
            <person name="Churcher C.M."/>
            <person name="Cooper J."/>
            <person name="Haydock S."/>
            <person name="van Driessche N."/>
            <person name="Cronin A."/>
            <person name="Goodhead I."/>
            <person name="Muzny D.M."/>
            <person name="Mourier T."/>
            <person name="Pain A."/>
            <person name="Lu M."/>
            <person name="Harper D."/>
            <person name="Lindsay R."/>
            <person name="Hauser H."/>
            <person name="James K.D."/>
            <person name="Quiles M."/>
            <person name="Madan Babu M."/>
            <person name="Saito T."/>
            <person name="Buchrieser C."/>
            <person name="Wardroper A."/>
            <person name="Felder M."/>
            <person name="Thangavelu M."/>
            <person name="Johnson D."/>
            <person name="Knights A."/>
            <person name="Loulseged H."/>
            <person name="Mungall K.L."/>
            <person name="Oliver K."/>
            <person name="Price C."/>
            <person name="Quail M.A."/>
            <person name="Urushihara H."/>
            <person name="Hernandez J."/>
            <person name="Rabbinowitsch E."/>
            <person name="Steffen D."/>
            <person name="Sanders M."/>
            <person name="Ma J."/>
            <person name="Kohara Y."/>
            <person name="Sharp S."/>
            <person name="Simmonds M.N."/>
            <person name="Spiegler S."/>
            <person name="Tivey A."/>
            <person name="Sugano S."/>
            <person name="White B."/>
            <person name="Walker D."/>
            <person name="Woodward J.R."/>
            <person name="Winckler T."/>
            <person name="Tanaka Y."/>
            <person name="Shaulsky G."/>
            <person name="Schleicher M."/>
            <person name="Weinstock G.M."/>
            <person name="Rosenthal A."/>
            <person name="Cox E.C."/>
            <person name="Chisholm R.L."/>
            <person name="Gibbs R.A."/>
            <person name="Loomis W.F."/>
            <person name="Platzer M."/>
            <person name="Kay R.R."/>
            <person name="Williams J.G."/>
            <person name="Dear P.H."/>
            <person name="Noegel A.A."/>
            <person name="Barrell B.G."/>
            <person name="Kuspa A."/>
        </authorList>
    </citation>
    <scope>NUCLEOTIDE SEQUENCE [LARGE SCALE GENOMIC DNA]</scope>
    <source>
        <strain>AX4</strain>
    </source>
</reference>
<gene>
    <name type="primary">rpl28</name>
    <name type="ORF">DDB_G0282379</name>
</gene>
<comment type="similarity">
    <text evidence="1">Belongs to the eukaryotic ribosomal protein eL28 family.</text>
</comment>
<name>RL28_DICDI</name>
<protein>
    <recommendedName>
        <fullName evidence="1">Large ribosomal subunit protein eL28</fullName>
    </recommendedName>
    <alternativeName>
        <fullName>60S ribosomal protein L28</fullName>
    </alternativeName>
</protein>
<organism>
    <name type="scientific">Dictyostelium discoideum</name>
    <name type="common">Social amoeba</name>
    <dbReference type="NCBI Taxonomy" id="44689"/>
    <lineage>
        <taxon>Eukaryota</taxon>
        <taxon>Amoebozoa</taxon>
        <taxon>Evosea</taxon>
        <taxon>Eumycetozoa</taxon>
        <taxon>Dictyostelia</taxon>
        <taxon>Dictyosteliales</taxon>
        <taxon>Dictyosteliaceae</taxon>
        <taxon>Dictyostelium</taxon>
    </lineage>
</organism>
<keyword id="KW-1185">Reference proteome</keyword>
<keyword id="KW-0687">Ribonucleoprotein</keyword>
<keyword id="KW-0689">Ribosomal protein</keyword>
<dbReference type="EMBL" id="AY007804">
    <property type="protein sequence ID" value="AAG32533.1"/>
    <property type="molecule type" value="mRNA"/>
</dbReference>
<dbReference type="EMBL" id="AAFI02000047">
    <property type="protein sequence ID" value="EAL66049.1"/>
    <property type="molecule type" value="Genomic_DNA"/>
</dbReference>
<dbReference type="RefSeq" id="XP_640178.1">
    <property type="nucleotide sequence ID" value="XM_635086.1"/>
</dbReference>
<dbReference type="SMR" id="Q9GS21"/>
<dbReference type="FunCoup" id="Q9GS21">
    <property type="interactions" value="487"/>
</dbReference>
<dbReference type="STRING" id="44689.Q9GS21"/>
<dbReference type="PaxDb" id="44689-DDB0214936"/>
<dbReference type="EnsemblProtists" id="EAL66049">
    <property type="protein sequence ID" value="EAL66049"/>
    <property type="gene ID" value="DDB_G0282379"/>
</dbReference>
<dbReference type="GeneID" id="8623717"/>
<dbReference type="KEGG" id="ddi:DDB_G0282379"/>
<dbReference type="dictyBase" id="DDB_G0282379">
    <property type="gene designation" value="rpl28"/>
</dbReference>
<dbReference type="VEuPathDB" id="AmoebaDB:DDB_G0282379"/>
<dbReference type="eggNOG" id="KOG3412">
    <property type="taxonomic scope" value="Eukaryota"/>
</dbReference>
<dbReference type="HOGENOM" id="CLU_106801_2_0_1"/>
<dbReference type="InParanoid" id="Q9GS21"/>
<dbReference type="OMA" id="GKYGQRP"/>
<dbReference type="PhylomeDB" id="Q9GS21"/>
<dbReference type="Reactome" id="R-DDI-156827">
    <property type="pathway name" value="L13a-mediated translational silencing of Ceruloplasmin expression"/>
</dbReference>
<dbReference type="Reactome" id="R-DDI-1799339">
    <property type="pathway name" value="SRP-dependent cotranslational protein targeting to membrane"/>
</dbReference>
<dbReference type="Reactome" id="R-DDI-72689">
    <property type="pathway name" value="Formation of a pool of free 40S subunits"/>
</dbReference>
<dbReference type="Reactome" id="R-DDI-72706">
    <property type="pathway name" value="GTP hydrolysis and joining of the 60S ribosomal subunit"/>
</dbReference>
<dbReference type="Reactome" id="R-DDI-975956">
    <property type="pathway name" value="Nonsense Mediated Decay (NMD) independent of the Exon Junction Complex (EJC)"/>
</dbReference>
<dbReference type="Reactome" id="R-DDI-975957">
    <property type="pathway name" value="Nonsense Mediated Decay (NMD) enhanced by the Exon Junction Complex (EJC)"/>
</dbReference>
<dbReference type="PRO" id="PR:Q9GS21"/>
<dbReference type="Proteomes" id="UP000002195">
    <property type="component" value="Chromosome 3"/>
</dbReference>
<dbReference type="GO" id="GO:0022625">
    <property type="term" value="C:cytosolic large ribosomal subunit"/>
    <property type="evidence" value="ECO:0000318"/>
    <property type="project" value="GO_Central"/>
</dbReference>
<dbReference type="GO" id="GO:0031012">
    <property type="term" value="C:extracellular matrix"/>
    <property type="evidence" value="ECO:0007005"/>
    <property type="project" value="dictyBase"/>
</dbReference>
<dbReference type="GO" id="GO:0003735">
    <property type="term" value="F:structural constituent of ribosome"/>
    <property type="evidence" value="ECO:0007669"/>
    <property type="project" value="InterPro"/>
</dbReference>
<dbReference type="GO" id="GO:0006412">
    <property type="term" value="P:translation"/>
    <property type="evidence" value="ECO:0007669"/>
    <property type="project" value="InterPro"/>
</dbReference>
<dbReference type="FunFam" id="3.30.390.110:FF:000005">
    <property type="entry name" value="60S ribosomal protein L28"/>
    <property type="match status" value="1"/>
</dbReference>
<dbReference type="Gene3D" id="3.30.390.110">
    <property type="match status" value="1"/>
</dbReference>
<dbReference type="InterPro" id="IPR002672">
    <property type="entry name" value="Ribosomal_eL28"/>
</dbReference>
<dbReference type="InterPro" id="IPR029004">
    <property type="entry name" value="Ribosomal_eL28/Mak16"/>
</dbReference>
<dbReference type="PANTHER" id="PTHR10544">
    <property type="entry name" value="60S RIBOSOMAL PROTEIN L28"/>
    <property type="match status" value="1"/>
</dbReference>
<dbReference type="Pfam" id="PF01778">
    <property type="entry name" value="Ribosomal_L28e"/>
    <property type="match status" value="1"/>
</dbReference>